<feature type="chain" id="PRO_0000100017" description="Dual-specificity RNA pseudouridine synthase RluF">
    <location>
        <begin position="1"/>
        <end position="290"/>
    </location>
</feature>
<feature type="domain" description="S4 RNA-binding" evidence="2">
    <location>
        <begin position="7"/>
        <end position="74"/>
    </location>
</feature>
<feature type="region of interest" description="Interaction with RNA" evidence="1">
    <location>
        <begin position="105"/>
        <end position="108"/>
    </location>
</feature>
<feature type="region of interest" description="Interaction with RNA" evidence="1">
    <location>
        <begin position="187"/>
        <end position="190"/>
    </location>
</feature>
<feature type="region of interest" description="Disordered" evidence="3">
    <location>
        <begin position="241"/>
        <end position="290"/>
    </location>
</feature>
<feature type="compositionally biased region" description="Basic and acidic residues" evidence="3">
    <location>
        <begin position="261"/>
        <end position="271"/>
    </location>
</feature>
<feature type="active site" description="Nucleophile" evidence="1">
    <location>
        <position position="107"/>
    </location>
</feature>
<gene>
    <name type="primary">rluF</name>
    <name type="ordered locus">c4988</name>
</gene>
<proteinExistence type="inferred from homology"/>
<keyword id="KW-0413">Isomerase</keyword>
<keyword id="KW-1185">Reference proteome</keyword>
<keyword id="KW-0694">RNA-binding</keyword>
<keyword id="KW-0698">rRNA processing</keyword>
<keyword id="KW-0819">tRNA processing</keyword>
<dbReference type="EC" id="5.4.99.-" evidence="1"/>
<dbReference type="EC" id="5.4.99.21" evidence="1"/>
<dbReference type="EMBL" id="AE014075">
    <property type="protein sequence ID" value="AAN83414.1"/>
    <property type="molecule type" value="Genomic_DNA"/>
</dbReference>
<dbReference type="RefSeq" id="WP_000936385.1">
    <property type="nucleotide sequence ID" value="NZ_CP051263.1"/>
</dbReference>
<dbReference type="SMR" id="Q8FB47"/>
<dbReference type="STRING" id="199310.c4988"/>
<dbReference type="KEGG" id="ecc:c4988"/>
<dbReference type="eggNOG" id="COG1187">
    <property type="taxonomic scope" value="Bacteria"/>
</dbReference>
<dbReference type="HOGENOM" id="CLU_024979_6_1_6"/>
<dbReference type="BioCyc" id="ECOL199310:C4988-MONOMER"/>
<dbReference type="Proteomes" id="UP000001410">
    <property type="component" value="Chromosome"/>
</dbReference>
<dbReference type="GO" id="GO:0160138">
    <property type="term" value="F:23S rRNA pseudouridine(2604) synthase activity"/>
    <property type="evidence" value="ECO:0007669"/>
    <property type="project" value="UniProtKB-EC"/>
</dbReference>
<dbReference type="GO" id="GO:0003723">
    <property type="term" value="F:RNA binding"/>
    <property type="evidence" value="ECO:0007669"/>
    <property type="project" value="UniProtKB-KW"/>
</dbReference>
<dbReference type="GO" id="GO:0000455">
    <property type="term" value="P:enzyme-directed rRNA pseudouridine synthesis"/>
    <property type="evidence" value="ECO:0007669"/>
    <property type="project" value="UniProtKB-ARBA"/>
</dbReference>
<dbReference type="GO" id="GO:0008033">
    <property type="term" value="P:tRNA processing"/>
    <property type="evidence" value="ECO:0007669"/>
    <property type="project" value="UniProtKB-KW"/>
</dbReference>
<dbReference type="CDD" id="cd02554">
    <property type="entry name" value="PseudoU_synth_RluF"/>
    <property type="match status" value="1"/>
</dbReference>
<dbReference type="CDD" id="cd00165">
    <property type="entry name" value="S4"/>
    <property type="match status" value="1"/>
</dbReference>
<dbReference type="FunFam" id="3.10.290.10:FF:000003">
    <property type="entry name" value="Pseudouridine synthase"/>
    <property type="match status" value="1"/>
</dbReference>
<dbReference type="FunFam" id="3.30.70.1560:FF:000002">
    <property type="entry name" value="Pseudouridine synthase"/>
    <property type="match status" value="1"/>
</dbReference>
<dbReference type="Gene3D" id="3.30.70.1560">
    <property type="entry name" value="Alpha-L RNA-binding motif"/>
    <property type="match status" value="1"/>
</dbReference>
<dbReference type="Gene3D" id="3.30.70.580">
    <property type="entry name" value="Pseudouridine synthase I, catalytic domain, N-terminal subdomain"/>
    <property type="match status" value="1"/>
</dbReference>
<dbReference type="Gene3D" id="3.10.290.10">
    <property type="entry name" value="RNA-binding S4 domain"/>
    <property type="match status" value="1"/>
</dbReference>
<dbReference type="InterPro" id="IPR042092">
    <property type="entry name" value="PsdUridine_s_RsuA/RluB/E/F_cat"/>
</dbReference>
<dbReference type="InterPro" id="IPR020103">
    <property type="entry name" value="PsdUridine_synth_cat_dom_sf"/>
</dbReference>
<dbReference type="InterPro" id="IPR006145">
    <property type="entry name" value="PsdUridine_synth_RsuA/RluA"/>
</dbReference>
<dbReference type="InterPro" id="IPR000748">
    <property type="entry name" value="PsdUridine_synth_RsuA/RluB/E/F"/>
</dbReference>
<dbReference type="InterPro" id="IPR018496">
    <property type="entry name" value="PsdUridine_synth_RsuA/RluB_CS"/>
</dbReference>
<dbReference type="InterPro" id="IPR050343">
    <property type="entry name" value="RsuA_PseudoU_synthase"/>
</dbReference>
<dbReference type="InterPro" id="IPR002942">
    <property type="entry name" value="S4_RNA-bd"/>
</dbReference>
<dbReference type="InterPro" id="IPR036986">
    <property type="entry name" value="S4_RNA-bd_sf"/>
</dbReference>
<dbReference type="InterPro" id="IPR020094">
    <property type="entry name" value="TruA/RsuA/RluB/E/F_N"/>
</dbReference>
<dbReference type="NCBIfam" id="NF007784">
    <property type="entry name" value="PRK10475.1"/>
    <property type="match status" value="1"/>
</dbReference>
<dbReference type="NCBIfam" id="TIGR00093">
    <property type="entry name" value="pseudouridine synthase"/>
    <property type="match status" value="1"/>
</dbReference>
<dbReference type="PANTHER" id="PTHR47683">
    <property type="entry name" value="PSEUDOURIDINE SYNTHASE FAMILY PROTEIN-RELATED"/>
    <property type="match status" value="1"/>
</dbReference>
<dbReference type="PANTHER" id="PTHR47683:SF2">
    <property type="entry name" value="RNA-BINDING S4 DOMAIN-CONTAINING PROTEIN"/>
    <property type="match status" value="1"/>
</dbReference>
<dbReference type="Pfam" id="PF00849">
    <property type="entry name" value="PseudoU_synth_2"/>
    <property type="match status" value="1"/>
</dbReference>
<dbReference type="Pfam" id="PF01479">
    <property type="entry name" value="S4"/>
    <property type="match status" value="1"/>
</dbReference>
<dbReference type="SMART" id="SM00363">
    <property type="entry name" value="S4"/>
    <property type="match status" value="1"/>
</dbReference>
<dbReference type="SUPFAM" id="SSF55174">
    <property type="entry name" value="Alpha-L RNA-binding motif"/>
    <property type="match status" value="1"/>
</dbReference>
<dbReference type="SUPFAM" id="SSF55120">
    <property type="entry name" value="Pseudouridine synthase"/>
    <property type="match status" value="1"/>
</dbReference>
<dbReference type="PROSITE" id="PS01149">
    <property type="entry name" value="PSI_RSU"/>
    <property type="match status" value="1"/>
</dbReference>
<dbReference type="PROSITE" id="PS50889">
    <property type="entry name" value="S4"/>
    <property type="match status" value="1"/>
</dbReference>
<reference key="1">
    <citation type="journal article" date="2002" name="Proc. Natl. Acad. Sci. U.S.A.">
        <title>Extensive mosaic structure revealed by the complete genome sequence of uropathogenic Escherichia coli.</title>
        <authorList>
            <person name="Welch R.A."/>
            <person name="Burland V."/>
            <person name="Plunkett G. III"/>
            <person name="Redford P."/>
            <person name="Roesch P."/>
            <person name="Rasko D."/>
            <person name="Buckles E.L."/>
            <person name="Liou S.-R."/>
            <person name="Boutin A."/>
            <person name="Hackett J."/>
            <person name="Stroud D."/>
            <person name="Mayhew G.F."/>
            <person name="Rose D.J."/>
            <person name="Zhou S."/>
            <person name="Schwartz D.C."/>
            <person name="Perna N.T."/>
            <person name="Mobley H.L.T."/>
            <person name="Donnenberg M.S."/>
            <person name="Blattner F.R."/>
        </authorList>
    </citation>
    <scope>NUCLEOTIDE SEQUENCE [LARGE SCALE GENOMIC DNA]</scope>
    <source>
        <strain>CFT073 / ATCC 700928 / UPEC</strain>
    </source>
</reference>
<comment type="function">
    <text evidence="1">Dual specificity enzyme that catalyzes the synthesis of pseudouridine from uracil-2604 in 23S ribosomal RNA and from uracil-35 in the anticodon of tRNA(Tyr).</text>
</comment>
<comment type="catalytic activity">
    <reaction evidence="1">
        <text>uridine(2604) in 23S rRNA = pseudouridine(2604) in 23S rRNA</text>
        <dbReference type="Rhea" id="RHEA:38875"/>
        <dbReference type="Rhea" id="RHEA-COMP:10093"/>
        <dbReference type="Rhea" id="RHEA-COMP:10094"/>
        <dbReference type="ChEBI" id="CHEBI:65314"/>
        <dbReference type="ChEBI" id="CHEBI:65315"/>
        <dbReference type="EC" id="5.4.99.21"/>
    </reaction>
</comment>
<comment type="catalytic activity">
    <reaction evidence="1">
        <text>uridine(35) in tRNA(Tyr) = pseudouridine(35) in tRNA(Tyr)</text>
        <dbReference type="Rhea" id="RHEA:60556"/>
        <dbReference type="Rhea" id="RHEA-COMP:15607"/>
        <dbReference type="Rhea" id="RHEA-COMP:15608"/>
        <dbReference type="ChEBI" id="CHEBI:65314"/>
        <dbReference type="ChEBI" id="CHEBI:65315"/>
    </reaction>
</comment>
<comment type="subunit">
    <text evidence="1">Monomer.</text>
</comment>
<comment type="similarity">
    <text evidence="4">Belongs to the pseudouridine synthase RsuA family.</text>
</comment>
<organism>
    <name type="scientific">Escherichia coli O6:H1 (strain CFT073 / ATCC 700928 / UPEC)</name>
    <dbReference type="NCBI Taxonomy" id="199310"/>
    <lineage>
        <taxon>Bacteria</taxon>
        <taxon>Pseudomonadati</taxon>
        <taxon>Pseudomonadota</taxon>
        <taxon>Gammaproteobacteria</taxon>
        <taxon>Enterobacterales</taxon>
        <taxon>Enterobacteriaceae</taxon>
        <taxon>Escherichia</taxon>
    </lineage>
</organism>
<sequence>MLPDSSVRLNKYISESGICSRREADRYIEQGNVFLNGKRATIGDQVKPGDVVKVNGQLIEPRESEDLVLIALNKPVGIVSTTEDGERDNIVDFVNHSKRVFPIGRLDKDSQGLIFLTNHGDLVNKILRAGNDHEKEYLVTVDKPITDEFIRGMGAGVPILGTVTKKCKVKKEAPFVFRITLVQGLNRQIRRMCEHFGYEVKKLERTRIMNVSLSGIPLGEWRDLTDDELIDLFKLIENSSSEAKPKAKAKPKTVGIKRPVVKMEKTAEKGGRPASNGKRFTSPGRKKKGR</sequence>
<accession>Q8FB47</accession>
<name>RLUF_ECOL6</name>
<evidence type="ECO:0000250" key="1">
    <source>
        <dbReference type="UniProtKB" id="P32684"/>
    </source>
</evidence>
<evidence type="ECO:0000255" key="2">
    <source>
        <dbReference type="PROSITE-ProRule" id="PRU00182"/>
    </source>
</evidence>
<evidence type="ECO:0000256" key="3">
    <source>
        <dbReference type="SAM" id="MobiDB-lite"/>
    </source>
</evidence>
<evidence type="ECO:0000305" key="4"/>
<protein>
    <recommendedName>
        <fullName evidence="1">Dual-specificity RNA pseudouridine synthase RluF</fullName>
        <ecNumber evidence="1">5.4.99.-</ecNumber>
        <ecNumber evidence="1">5.4.99.21</ecNumber>
    </recommendedName>
    <alternativeName>
        <fullName evidence="1">23S rRNA pseudouridine(2604) synthase</fullName>
    </alternativeName>
    <alternativeName>
        <fullName evidence="1">Ribosomal large subunit pseudouridine synthase F</fullName>
    </alternativeName>
    <alternativeName>
        <fullName evidence="1">rRNA pseudouridylate synthase F</fullName>
    </alternativeName>
    <alternativeName>
        <fullName evidence="1">rRNA-uridine isomerase F</fullName>
    </alternativeName>
    <alternativeName>
        <fullName evidence="1">tRNA(Tyr) pseudouridine(35) synthase</fullName>
    </alternativeName>
</protein>